<feature type="chain" id="PRO_0000326969" description="Protoheme IX farnesyltransferase">
    <location>
        <begin position="1"/>
        <end position="298"/>
    </location>
</feature>
<feature type="transmembrane region" description="Helical" evidence="1">
    <location>
        <begin position="16"/>
        <end position="36"/>
    </location>
</feature>
<feature type="transmembrane region" description="Helical" evidence="1">
    <location>
        <begin position="45"/>
        <end position="65"/>
    </location>
</feature>
<feature type="transmembrane region" description="Helical" evidence="1">
    <location>
        <begin position="93"/>
        <end position="113"/>
    </location>
</feature>
<feature type="transmembrane region" description="Helical" evidence="1">
    <location>
        <begin position="114"/>
        <end position="134"/>
    </location>
</feature>
<feature type="transmembrane region" description="Helical" evidence="1">
    <location>
        <begin position="141"/>
        <end position="161"/>
    </location>
</feature>
<feature type="transmembrane region" description="Helical" evidence="1">
    <location>
        <begin position="172"/>
        <end position="192"/>
    </location>
</feature>
<feature type="transmembrane region" description="Helical" evidence="1">
    <location>
        <begin position="218"/>
        <end position="238"/>
    </location>
</feature>
<feature type="transmembrane region" description="Helical" evidence="1">
    <location>
        <begin position="241"/>
        <end position="261"/>
    </location>
</feature>
<feature type="transmembrane region" description="Helical" evidence="1">
    <location>
        <begin position="277"/>
        <end position="297"/>
    </location>
</feature>
<accession>Q8PFU4</accession>
<comment type="function">
    <text evidence="1">Converts heme B (protoheme IX) to heme O by substitution of the vinyl group on carbon 2 of heme B porphyrin ring with a hydroxyethyl farnesyl side group.</text>
</comment>
<comment type="catalytic activity">
    <reaction evidence="1">
        <text>heme b + (2E,6E)-farnesyl diphosphate + H2O = Fe(II)-heme o + diphosphate</text>
        <dbReference type="Rhea" id="RHEA:28070"/>
        <dbReference type="ChEBI" id="CHEBI:15377"/>
        <dbReference type="ChEBI" id="CHEBI:33019"/>
        <dbReference type="ChEBI" id="CHEBI:60344"/>
        <dbReference type="ChEBI" id="CHEBI:60530"/>
        <dbReference type="ChEBI" id="CHEBI:175763"/>
        <dbReference type="EC" id="2.5.1.141"/>
    </reaction>
</comment>
<comment type="pathway">
    <text evidence="1">Porphyrin-containing compound metabolism; heme O biosynthesis; heme O from protoheme: step 1/1.</text>
</comment>
<comment type="subcellular location">
    <subcellularLocation>
        <location evidence="1">Cell inner membrane</location>
        <topology evidence="1">Multi-pass membrane protein</topology>
    </subcellularLocation>
</comment>
<comment type="miscellaneous">
    <text evidence="1">Carbon 2 of the heme B porphyrin ring is defined according to the Fischer nomenclature.</text>
</comment>
<comment type="similarity">
    <text evidence="1">Belongs to the UbiA prenyltransferase family. Protoheme IX farnesyltransferase subfamily.</text>
</comment>
<sequence>MAVSARDYWDLTKPKVVALIVFTALVGMFLAIPDMPTWLQVRTGALGFLGIWLAASAAAAINQLLDAKIDAQMARTSWRPLVVGKVRPWQVLVFAGVLIVISMTILVVWVNVITAVLTFASLIGYAVIYTVYLKRATSQNIVIGGLAGATPPMLGWAAVTGLPTSADWINASLLVLIIFIWTPPHFWALAIFRRADYAKAAIPMLPVTHGVPHTRKQILVYTVLLAIVTLAPVAVGMSGMFYLGGAAVLNAVFLWYAWRMLNPPDELFSMKMFGYSIVYLMALFAFLMVDHLLLPWVR</sequence>
<dbReference type="EC" id="2.5.1.141" evidence="1"/>
<dbReference type="EMBL" id="AE008923">
    <property type="protein sequence ID" value="AAM38721.1"/>
    <property type="molecule type" value="Genomic_DNA"/>
</dbReference>
<dbReference type="RefSeq" id="WP_005923011.1">
    <property type="nucleotide sequence ID" value="NC_003919.1"/>
</dbReference>
<dbReference type="SMR" id="Q8PFU4"/>
<dbReference type="GeneID" id="66912899"/>
<dbReference type="KEGG" id="xac:XAC3879"/>
<dbReference type="eggNOG" id="COG0109">
    <property type="taxonomic scope" value="Bacteria"/>
</dbReference>
<dbReference type="HOGENOM" id="CLU_029631_0_2_6"/>
<dbReference type="UniPathway" id="UPA00834">
    <property type="reaction ID" value="UER00712"/>
</dbReference>
<dbReference type="Proteomes" id="UP000000576">
    <property type="component" value="Chromosome"/>
</dbReference>
<dbReference type="GO" id="GO:0005886">
    <property type="term" value="C:plasma membrane"/>
    <property type="evidence" value="ECO:0007669"/>
    <property type="project" value="UniProtKB-SubCell"/>
</dbReference>
<dbReference type="GO" id="GO:0008495">
    <property type="term" value="F:protoheme IX farnesyltransferase activity"/>
    <property type="evidence" value="ECO:0007669"/>
    <property type="project" value="UniProtKB-UniRule"/>
</dbReference>
<dbReference type="GO" id="GO:0048034">
    <property type="term" value="P:heme O biosynthetic process"/>
    <property type="evidence" value="ECO:0007669"/>
    <property type="project" value="UniProtKB-UniRule"/>
</dbReference>
<dbReference type="CDD" id="cd13957">
    <property type="entry name" value="PT_UbiA_Cox10"/>
    <property type="match status" value="1"/>
</dbReference>
<dbReference type="FunFam" id="1.10.357.140:FF:000001">
    <property type="entry name" value="Protoheme IX farnesyltransferase"/>
    <property type="match status" value="1"/>
</dbReference>
<dbReference type="Gene3D" id="1.10.357.140">
    <property type="entry name" value="UbiA prenyltransferase"/>
    <property type="match status" value="1"/>
</dbReference>
<dbReference type="HAMAP" id="MF_00154">
    <property type="entry name" value="CyoE_CtaB"/>
    <property type="match status" value="1"/>
</dbReference>
<dbReference type="InterPro" id="IPR006369">
    <property type="entry name" value="Protohaem_IX_farnesylTrfase"/>
</dbReference>
<dbReference type="InterPro" id="IPR000537">
    <property type="entry name" value="UbiA_prenyltransferase"/>
</dbReference>
<dbReference type="InterPro" id="IPR030470">
    <property type="entry name" value="UbiA_prenylTrfase_CS"/>
</dbReference>
<dbReference type="InterPro" id="IPR044878">
    <property type="entry name" value="UbiA_sf"/>
</dbReference>
<dbReference type="NCBIfam" id="TIGR01473">
    <property type="entry name" value="cyoE_ctaB"/>
    <property type="match status" value="1"/>
</dbReference>
<dbReference type="NCBIfam" id="NF003349">
    <property type="entry name" value="PRK04375.1-2"/>
    <property type="match status" value="1"/>
</dbReference>
<dbReference type="PANTHER" id="PTHR43448:SF7">
    <property type="entry name" value="4-HYDROXYBENZOATE SOLANESYLTRANSFERASE"/>
    <property type="match status" value="1"/>
</dbReference>
<dbReference type="PANTHER" id="PTHR43448">
    <property type="entry name" value="PROTOHEME IX FARNESYLTRANSFERASE, MITOCHONDRIAL"/>
    <property type="match status" value="1"/>
</dbReference>
<dbReference type="Pfam" id="PF01040">
    <property type="entry name" value="UbiA"/>
    <property type="match status" value="1"/>
</dbReference>
<dbReference type="PROSITE" id="PS00943">
    <property type="entry name" value="UBIA"/>
    <property type="match status" value="1"/>
</dbReference>
<name>CYOE_XANAC</name>
<keyword id="KW-0997">Cell inner membrane</keyword>
<keyword id="KW-1003">Cell membrane</keyword>
<keyword id="KW-0350">Heme biosynthesis</keyword>
<keyword id="KW-0472">Membrane</keyword>
<keyword id="KW-0808">Transferase</keyword>
<keyword id="KW-0812">Transmembrane</keyword>
<keyword id="KW-1133">Transmembrane helix</keyword>
<evidence type="ECO:0000255" key="1">
    <source>
        <dbReference type="HAMAP-Rule" id="MF_00154"/>
    </source>
</evidence>
<organism>
    <name type="scientific">Xanthomonas axonopodis pv. citri (strain 306)</name>
    <dbReference type="NCBI Taxonomy" id="190486"/>
    <lineage>
        <taxon>Bacteria</taxon>
        <taxon>Pseudomonadati</taxon>
        <taxon>Pseudomonadota</taxon>
        <taxon>Gammaproteobacteria</taxon>
        <taxon>Lysobacterales</taxon>
        <taxon>Lysobacteraceae</taxon>
        <taxon>Xanthomonas</taxon>
    </lineage>
</organism>
<proteinExistence type="inferred from homology"/>
<reference key="1">
    <citation type="journal article" date="2002" name="Nature">
        <title>Comparison of the genomes of two Xanthomonas pathogens with differing host specificities.</title>
        <authorList>
            <person name="da Silva A.C.R."/>
            <person name="Ferro J.A."/>
            <person name="Reinach F.C."/>
            <person name="Farah C.S."/>
            <person name="Furlan L.R."/>
            <person name="Quaggio R.B."/>
            <person name="Monteiro-Vitorello C.B."/>
            <person name="Van Sluys M.A."/>
            <person name="Almeida N.F. Jr."/>
            <person name="Alves L.M.C."/>
            <person name="do Amaral A.M."/>
            <person name="Bertolini M.C."/>
            <person name="Camargo L.E.A."/>
            <person name="Camarotte G."/>
            <person name="Cannavan F."/>
            <person name="Cardozo J."/>
            <person name="Chambergo F."/>
            <person name="Ciapina L.P."/>
            <person name="Cicarelli R.M.B."/>
            <person name="Coutinho L.L."/>
            <person name="Cursino-Santos J.R."/>
            <person name="El-Dorry H."/>
            <person name="Faria J.B."/>
            <person name="Ferreira A.J.S."/>
            <person name="Ferreira R.C.C."/>
            <person name="Ferro M.I.T."/>
            <person name="Formighieri E.F."/>
            <person name="Franco M.C."/>
            <person name="Greggio C.C."/>
            <person name="Gruber A."/>
            <person name="Katsuyama A.M."/>
            <person name="Kishi L.T."/>
            <person name="Leite R.P."/>
            <person name="Lemos E.G.M."/>
            <person name="Lemos M.V.F."/>
            <person name="Locali E.C."/>
            <person name="Machado M.A."/>
            <person name="Madeira A.M.B.N."/>
            <person name="Martinez-Rossi N.M."/>
            <person name="Martins E.C."/>
            <person name="Meidanis J."/>
            <person name="Menck C.F.M."/>
            <person name="Miyaki C.Y."/>
            <person name="Moon D.H."/>
            <person name="Moreira L.M."/>
            <person name="Novo M.T.M."/>
            <person name="Okura V.K."/>
            <person name="Oliveira M.C."/>
            <person name="Oliveira V.R."/>
            <person name="Pereira H.A."/>
            <person name="Rossi A."/>
            <person name="Sena J.A.D."/>
            <person name="Silva C."/>
            <person name="de Souza R.F."/>
            <person name="Spinola L.A.F."/>
            <person name="Takita M.A."/>
            <person name="Tamura R.E."/>
            <person name="Teixeira E.C."/>
            <person name="Tezza R.I.D."/>
            <person name="Trindade dos Santos M."/>
            <person name="Truffi D."/>
            <person name="Tsai S.M."/>
            <person name="White F.F."/>
            <person name="Setubal J.C."/>
            <person name="Kitajima J.P."/>
        </authorList>
    </citation>
    <scope>NUCLEOTIDE SEQUENCE [LARGE SCALE GENOMIC DNA]</scope>
    <source>
        <strain>306</strain>
    </source>
</reference>
<gene>
    <name evidence="1" type="primary">cyoE</name>
    <name type="synonym">coxD</name>
    <name type="ordered locus">XAC3879</name>
</gene>
<protein>
    <recommendedName>
        <fullName evidence="1">Protoheme IX farnesyltransferase</fullName>
        <ecNumber evidence="1">2.5.1.141</ecNumber>
    </recommendedName>
    <alternativeName>
        <fullName evidence="1">Heme B farnesyltransferase</fullName>
    </alternativeName>
    <alternativeName>
        <fullName evidence="1">Heme O synthase</fullName>
    </alternativeName>
</protein>